<comment type="function">
    <text evidence="1">Catalyzes the initial step of the lipid cycle reactions in the biosynthesis of the cell wall peptidoglycan: transfers peptidoglycan precursor phospho-MurNAc-pentapeptide from UDP-MurNAc-pentapeptide onto the lipid carrier undecaprenyl phosphate, yielding undecaprenyl-pyrophosphoryl-MurNAc-pentapeptide, known as lipid I.</text>
</comment>
<comment type="catalytic activity">
    <reaction evidence="1">
        <text>UDP-N-acetyl-alpha-D-muramoyl-L-alanyl-gamma-D-glutamyl-meso-2,6-diaminopimeloyl-D-alanyl-D-alanine + di-trans,octa-cis-undecaprenyl phosphate = di-trans,octa-cis-undecaprenyl diphospho-N-acetyl-alpha-D-muramoyl-L-alanyl-D-glutamyl-meso-2,6-diaminopimeloyl-D-alanyl-D-alanine + UMP</text>
        <dbReference type="Rhea" id="RHEA:28386"/>
        <dbReference type="ChEBI" id="CHEBI:57865"/>
        <dbReference type="ChEBI" id="CHEBI:60392"/>
        <dbReference type="ChEBI" id="CHEBI:61386"/>
        <dbReference type="ChEBI" id="CHEBI:61387"/>
        <dbReference type="EC" id="2.7.8.13"/>
    </reaction>
</comment>
<comment type="cofactor">
    <cofactor evidence="1">
        <name>Mg(2+)</name>
        <dbReference type="ChEBI" id="CHEBI:18420"/>
    </cofactor>
</comment>
<comment type="pathway">
    <text evidence="1">Cell wall biogenesis; peptidoglycan biosynthesis.</text>
</comment>
<comment type="subcellular location">
    <subcellularLocation>
        <location evidence="1">Cell inner membrane</location>
        <topology evidence="1">Multi-pass membrane protein</topology>
    </subcellularLocation>
</comment>
<comment type="similarity">
    <text evidence="1">Belongs to the glycosyltransferase 4 family. MraY subfamily.</text>
</comment>
<evidence type="ECO:0000255" key="1">
    <source>
        <dbReference type="HAMAP-Rule" id="MF_00038"/>
    </source>
</evidence>
<sequence>MLVWLAEYLVRYETAFNAISYITVRAILALLTALFISLWIGPKVIKRLQILKFGQEVRNDGPESHFAKKGTPTMGGVMILFSIGVSTLLWANLANSYIWVCLFVLFGYGAIGFVDDFRKITRKNTDGLIARWKYFWMSVVALVAILWLYWLGHDTDATRLVIPFFKDIMPQLGLFYIVLSYFVIVGTGNAVNLTDGLDGLAIMPTALVAGAFALIAWATGNVNFAEYLHIPYIKYSSEVVVFCTAIVGASLGFLWFNTYPAQVFMGDVGSLALGGALGVVAILVRQEFLLVIMGGVFVVEALSVILQVGSYKLRKQRIFRMAPIHHHFELKGWPEPRVIIRFWIISLMLVLMGLVTLKLR</sequence>
<dbReference type="EC" id="2.7.8.13" evidence="1"/>
<dbReference type="EMBL" id="CP000057">
    <property type="protein sequence ID" value="AAX88136.1"/>
    <property type="molecule type" value="Genomic_DNA"/>
</dbReference>
<dbReference type="RefSeq" id="WP_005690686.1">
    <property type="nucleotide sequence ID" value="NC_007146.2"/>
</dbReference>
<dbReference type="SMR" id="Q4QLG1"/>
<dbReference type="GeneID" id="93220141"/>
<dbReference type="KEGG" id="hit:NTHI1302"/>
<dbReference type="HOGENOM" id="CLU_023982_0_0_6"/>
<dbReference type="UniPathway" id="UPA00219"/>
<dbReference type="Proteomes" id="UP000002525">
    <property type="component" value="Chromosome"/>
</dbReference>
<dbReference type="GO" id="GO:0005886">
    <property type="term" value="C:plasma membrane"/>
    <property type="evidence" value="ECO:0007669"/>
    <property type="project" value="UniProtKB-SubCell"/>
</dbReference>
<dbReference type="GO" id="GO:0046872">
    <property type="term" value="F:metal ion binding"/>
    <property type="evidence" value="ECO:0007669"/>
    <property type="project" value="UniProtKB-KW"/>
</dbReference>
<dbReference type="GO" id="GO:0008963">
    <property type="term" value="F:phospho-N-acetylmuramoyl-pentapeptide-transferase activity"/>
    <property type="evidence" value="ECO:0007669"/>
    <property type="project" value="UniProtKB-UniRule"/>
</dbReference>
<dbReference type="GO" id="GO:0051992">
    <property type="term" value="F:UDP-N-acetylmuramoyl-L-alanyl-D-glutamyl-meso-2,6-diaminopimelyl-D-alanyl-D-alanine:undecaprenyl-phosphate transferase activity"/>
    <property type="evidence" value="ECO:0007669"/>
    <property type="project" value="RHEA"/>
</dbReference>
<dbReference type="GO" id="GO:0051301">
    <property type="term" value="P:cell division"/>
    <property type="evidence" value="ECO:0007669"/>
    <property type="project" value="UniProtKB-KW"/>
</dbReference>
<dbReference type="GO" id="GO:0071555">
    <property type="term" value="P:cell wall organization"/>
    <property type="evidence" value="ECO:0007669"/>
    <property type="project" value="UniProtKB-KW"/>
</dbReference>
<dbReference type="GO" id="GO:0009252">
    <property type="term" value="P:peptidoglycan biosynthetic process"/>
    <property type="evidence" value="ECO:0007669"/>
    <property type="project" value="UniProtKB-UniRule"/>
</dbReference>
<dbReference type="GO" id="GO:0008360">
    <property type="term" value="P:regulation of cell shape"/>
    <property type="evidence" value="ECO:0007669"/>
    <property type="project" value="UniProtKB-KW"/>
</dbReference>
<dbReference type="CDD" id="cd06852">
    <property type="entry name" value="GT_MraY"/>
    <property type="match status" value="1"/>
</dbReference>
<dbReference type="HAMAP" id="MF_00038">
    <property type="entry name" value="MraY"/>
    <property type="match status" value="1"/>
</dbReference>
<dbReference type="InterPro" id="IPR000715">
    <property type="entry name" value="Glycosyl_transferase_4"/>
</dbReference>
<dbReference type="InterPro" id="IPR003524">
    <property type="entry name" value="PNAcMuramoyl-5peptid_Trfase"/>
</dbReference>
<dbReference type="InterPro" id="IPR018480">
    <property type="entry name" value="PNAcMuramoyl-5peptid_Trfase_CS"/>
</dbReference>
<dbReference type="NCBIfam" id="TIGR00445">
    <property type="entry name" value="mraY"/>
    <property type="match status" value="1"/>
</dbReference>
<dbReference type="PANTHER" id="PTHR22926">
    <property type="entry name" value="PHOSPHO-N-ACETYLMURAMOYL-PENTAPEPTIDE-TRANSFERASE"/>
    <property type="match status" value="1"/>
</dbReference>
<dbReference type="PANTHER" id="PTHR22926:SF5">
    <property type="entry name" value="PHOSPHO-N-ACETYLMURAMOYL-PENTAPEPTIDE-TRANSFERASE HOMOLOG"/>
    <property type="match status" value="1"/>
</dbReference>
<dbReference type="Pfam" id="PF00953">
    <property type="entry name" value="Glycos_transf_4"/>
    <property type="match status" value="1"/>
</dbReference>
<dbReference type="Pfam" id="PF10555">
    <property type="entry name" value="MraY_sig1"/>
    <property type="match status" value="1"/>
</dbReference>
<dbReference type="PROSITE" id="PS01347">
    <property type="entry name" value="MRAY_1"/>
    <property type="match status" value="1"/>
</dbReference>
<dbReference type="PROSITE" id="PS01348">
    <property type="entry name" value="MRAY_2"/>
    <property type="match status" value="1"/>
</dbReference>
<accession>Q4QLG1</accession>
<gene>
    <name evidence="1" type="primary">mraY</name>
    <name type="ordered locus">NTHI1302</name>
</gene>
<organism>
    <name type="scientific">Haemophilus influenzae (strain 86-028NP)</name>
    <dbReference type="NCBI Taxonomy" id="281310"/>
    <lineage>
        <taxon>Bacteria</taxon>
        <taxon>Pseudomonadati</taxon>
        <taxon>Pseudomonadota</taxon>
        <taxon>Gammaproteobacteria</taxon>
        <taxon>Pasteurellales</taxon>
        <taxon>Pasteurellaceae</taxon>
        <taxon>Haemophilus</taxon>
    </lineage>
</organism>
<feature type="chain" id="PRO_0000108834" description="Phospho-N-acetylmuramoyl-pentapeptide-transferase">
    <location>
        <begin position="1"/>
        <end position="360"/>
    </location>
</feature>
<feature type="transmembrane region" description="Helical" evidence="1">
    <location>
        <begin position="21"/>
        <end position="41"/>
    </location>
</feature>
<feature type="transmembrane region" description="Helical" evidence="1">
    <location>
        <begin position="73"/>
        <end position="93"/>
    </location>
</feature>
<feature type="transmembrane region" description="Helical" evidence="1">
    <location>
        <begin position="94"/>
        <end position="114"/>
    </location>
</feature>
<feature type="transmembrane region" description="Helical" evidence="1">
    <location>
        <begin position="132"/>
        <end position="152"/>
    </location>
</feature>
<feature type="transmembrane region" description="Helical" evidence="1">
    <location>
        <begin position="168"/>
        <end position="188"/>
    </location>
</feature>
<feature type="transmembrane region" description="Helical" evidence="1">
    <location>
        <begin position="199"/>
        <end position="219"/>
    </location>
</feature>
<feature type="transmembrane region" description="Helical" evidence="1">
    <location>
        <begin position="239"/>
        <end position="259"/>
    </location>
</feature>
<feature type="transmembrane region" description="Helical" evidence="1">
    <location>
        <begin position="263"/>
        <end position="283"/>
    </location>
</feature>
<feature type="transmembrane region" description="Helical" evidence="1">
    <location>
        <begin position="288"/>
        <end position="308"/>
    </location>
</feature>
<feature type="transmembrane region" description="Helical" evidence="1">
    <location>
        <begin position="338"/>
        <end position="358"/>
    </location>
</feature>
<protein>
    <recommendedName>
        <fullName evidence="1">Phospho-N-acetylmuramoyl-pentapeptide-transferase</fullName>
        <ecNumber evidence="1">2.7.8.13</ecNumber>
    </recommendedName>
    <alternativeName>
        <fullName evidence="1">UDP-MurNAc-pentapeptide phosphotransferase</fullName>
    </alternativeName>
</protein>
<keyword id="KW-0131">Cell cycle</keyword>
<keyword id="KW-0132">Cell division</keyword>
<keyword id="KW-0997">Cell inner membrane</keyword>
<keyword id="KW-1003">Cell membrane</keyword>
<keyword id="KW-0133">Cell shape</keyword>
<keyword id="KW-0961">Cell wall biogenesis/degradation</keyword>
<keyword id="KW-0460">Magnesium</keyword>
<keyword id="KW-0472">Membrane</keyword>
<keyword id="KW-0479">Metal-binding</keyword>
<keyword id="KW-0573">Peptidoglycan synthesis</keyword>
<keyword id="KW-0808">Transferase</keyword>
<keyword id="KW-0812">Transmembrane</keyword>
<keyword id="KW-1133">Transmembrane helix</keyword>
<proteinExistence type="inferred from homology"/>
<reference key="1">
    <citation type="journal article" date="2005" name="J. Bacteriol.">
        <title>Genomic sequence of an otitis media isolate of nontypeable Haemophilus influenzae: comparative study with H. influenzae serotype d, strain KW20.</title>
        <authorList>
            <person name="Harrison A."/>
            <person name="Dyer D.W."/>
            <person name="Gillaspy A."/>
            <person name="Ray W.C."/>
            <person name="Mungur R."/>
            <person name="Carson M.B."/>
            <person name="Zhong H."/>
            <person name="Gipson J."/>
            <person name="Gipson M."/>
            <person name="Johnson L.S."/>
            <person name="Lewis L."/>
            <person name="Bakaletz L.O."/>
            <person name="Munson R.S. Jr."/>
        </authorList>
    </citation>
    <scope>NUCLEOTIDE SEQUENCE [LARGE SCALE GENOMIC DNA]</scope>
    <source>
        <strain>86-028NP</strain>
    </source>
</reference>
<name>MRAY_HAEI8</name>